<organism>
    <name type="scientific">Danio rerio</name>
    <name type="common">Zebrafish</name>
    <name type="synonym">Brachydanio rerio</name>
    <dbReference type="NCBI Taxonomy" id="7955"/>
    <lineage>
        <taxon>Eukaryota</taxon>
        <taxon>Metazoa</taxon>
        <taxon>Chordata</taxon>
        <taxon>Craniata</taxon>
        <taxon>Vertebrata</taxon>
        <taxon>Euteleostomi</taxon>
        <taxon>Actinopterygii</taxon>
        <taxon>Neopterygii</taxon>
        <taxon>Teleostei</taxon>
        <taxon>Ostariophysi</taxon>
        <taxon>Cypriniformes</taxon>
        <taxon>Danionidae</taxon>
        <taxon>Danioninae</taxon>
        <taxon>Danio</taxon>
    </lineage>
</organism>
<keyword id="KW-0175">Coiled coil</keyword>
<keyword id="KW-0240">DNA-directed RNA polymerase</keyword>
<keyword id="KW-0539">Nucleus</keyword>
<keyword id="KW-0597">Phosphoprotein</keyword>
<keyword id="KW-1185">Reference proteome</keyword>
<keyword id="KW-0804">Transcription</keyword>
<comment type="function">
    <text evidence="1">DNA-dependent RNA polymerase catalyzes the transcription of DNA into RNA using the four ribonucleoside triphosphates as substrates. Component of RNA polymerase I which synthesizes ribosomal RNA precursors. May be involved in recruitment of Pol I to rDNA promoters (By similarity).</text>
</comment>
<comment type="subunit">
    <text evidence="1">Component of the RNA polymerase I (Pol I) complex consisting of at least 13 subunits.</text>
</comment>
<comment type="subcellular location">
    <subcellularLocation>
        <location evidence="1">Nucleus</location>
        <location evidence="1">Nucleolus</location>
    </subcellularLocation>
</comment>
<comment type="similarity">
    <text evidence="5">Belongs to the eukaryotic RPA43 RNA polymerase subunit family.</text>
</comment>
<proteinExistence type="evidence at transcript level"/>
<reference key="1">
    <citation type="journal article" date="2004" name="Proc. Natl. Acad. Sci. U.S.A.">
        <title>Identification of 315 genes essential for early zebrafish development.</title>
        <authorList>
            <person name="Amsterdam A."/>
            <person name="Nissen R.M."/>
            <person name="Sun Z."/>
            <person name="Swindell E.C."/>
            <person name="Farrington S."/>
            <person name="Hopkins N."/>
        </authorList>
    </citation>
    <scope>NUCLEOTIDE SEQUENCE [LARGE SCALE MRNA]</scope>
</reference>
<reference key="2">
    <citation type="submission" date="2003-08" db="EMBL/GenBank/DDBJ databases">
        <authorList>
            <consortium name="NIH - Zebrafish Gene Collection (ZGC) project"/>
        </authorList>
    </citation>
    <scope>NUCLEOTIDE SEQUENCE [LARGE SCALE MRNA] OF 4-390</scope>
    <source>
        <tissue>Kidney</tissue>
    </source>
</reference>
<gene>
    <name evidence="2" type="primary">polr1f</name>
    <name type="synonym">twistnb</name>
</gene>
<accession>Q6PHG8</accession>
<accession>Q6DRH6</accession>
<sequence length="391" mass="43286">MANWTQEDGAPTPVTNPSEVSQVSGGSVTGGPAVTSCLIPSFAEAVKLLKARYSCLVLDTHRRHISLPPVHLKKKKTGIQEQLNAELLKYSNSLDGVPVAYDNIKVVGQHGNIYDDQGFIHFNIEASFVIFRPKNGSRLMGVINKMGASHVGCLVHGCFNASVMKPNALTSDQWRDSGLCVGQSLEFEVFQLDADAAGVLLIRGRLDRSRVQELVAQFEQKQVTAESSTEADATEDTTDSPKPKKKKKRKKDKNDTESSMEECVNNSSLQETSEHHQTTTEEDCSANGRHKEKKKKKKRDKNDTESSMDECMNNNSLQETALDTTEEDCNANERHKEKKKKKKRDKQQDSAEIVPTSDSSGYISDKTSRKRALEAGDDTETPAAKKKKKSK</sequence>
<evidence type="ECO:0000250" key="1"/>
<evidence type="ECO:0000250" key="2">
    <source>
        <dbReference type="UniProtKB" id="Q3B726"/>
    </source>
</evidence>
<evidence type="ECO:0000255" key="3"/>
<evidence type="ECO:0000256" key="4">
    <source>
        <dbReference type="SAM" id="MobiDB-lite"/>
    </source>
</evidence>
<evidence type="ECO:0000305" key="5"/>
<feature type="chain" id="PRO_0000288634" description="DNA-directed RNA polymerase I subunit RPA43">
    <location>
        <begin position="1"/>
        <end position="391"/>
    </location>
</feature>
<feature type="region of interest" description="Disordered" evidence="4">
    <location>
        <begin position="1"/>
        <end position="27"/>
    </location>
</feature>
<feature type="region of interest" description="Disordered" evidence="4">
    <location>
        <begin position="220"/>
        <end position="391"/>
    </location>
</feature>
<feature type="coiled-coil region" evidence="3">
    <location>
        <begin position="289"/>
        <end position="353"/>
    </location>
</feature>
<feature type="compositionally biased region" description="Basic residues" evidence="4">
    <location>
        <begin position="288"/>
        <end position="299"/>
    </location>
</feature>
<feature type="compositionally biased region" description="Polar residues" evidence="4">
    <location>
        <begin position="312"/>
        <end position="323"/>
    </location>
</feature>
<feature type="compositionally biased region" description="Basic residues" evidence="4">
    <location>
        <begin position="336"/>
        <end position="345"/>
    </location>
</feature>
<feature type="sequence conflict" description="In Ref. 1; AAT68101." evidence="5" ref="1">
    <original>D</original>
    <variation>G</variation>
    <location>
        <position position="239"/>
    </location>
</feature>
<feature type="sequence conflict" description="In Ref. 1; AAT68101." evidence="5" ref="1">
    <original>E</original>
    <variation>EK</variation>
    <location>
        <position position="292"/>
    </location>
</feature>
<feature type="sequence conflict" description="In Ref. 1; AAT68101." evidence="5" ref="1">
    <location>
        <begin position="338"/>
        <end position="339"/>
    </location>
</feature>
<feature type="sequence conflict" description="In Ref. 1; AAT68101." evidence="5" ref="1">
    <original>T</original>
    <variation>I</variation>
    <location>
        <position position="379"/>
    </location>
</feature>
<feature type="sequence conflict" description="In Ref. 1; AAT68101." evidence="5" ref="1">
    <original>P</original>
    <variation>L</variation>
    <location>
        <position position="382"/>
    </location>
</feature>
<dbReference type="EMBL" id="AY648783">
    <property type="protein sequence ID" value="AAT68101.1"/>
    <property type="molecule type" value="mRNA"/>
</dbReference>
<dbReference type="EMBL" id="BC056557">
    <property type="protein sequence ID" value="AAH56557.1"/>
    <property type="molecule type" value="mRNA"/>
</dbReference>
<dbReference type="RefSeq" id="NP_001007154.1">
    <property type="nucleotide sequence ID" value="NM_001007153.1"/>
</dbReference>
<dbReference type="SMR" id="Q6PHG8"/>
<dbReference type="FunCoup" id="Q6PHG8">
    <property type="interactions" value="276"/>
</dbReference>
<dbReference type="STRING" id="7955.ENSDARP00000104602"/>
<dbReference type="PaxDb" id="7955-ENSDARP00000104602"/>
<dbReference type="GeneID" id="402856"/>
<dbReference type="KEGG" id="dre:402856"/>
<dbReference type="AGR" id="ZFIN:ZDB-GENE-041007-3"/>
<dbReference type="CTD" id="221830"/>
<dbReference type="ZFIN" id="ZDB-GENE-041007-3">
    <property type="gene designation" value="polr1f"/>
</dbReference>
<dbReference type="eggNOG" id="KOG4134">
    <property type="taxonomic scope" value="Eukaryota"/>
</dbReference>
<dbReference type="InParanoid" id="Q6PHG8"/>
<dbReference type="OrthoDB" id="10250504at2759"/>
<dbReference type="PRO" id="PR:Q6PHG8"/>
<dbReference type="Proteomes" id="UP000000437">
    <property type="component" value="Chromosome 19"/>
</dbReference>
<dbReference type="GO" id="GO:0005736">
    <property type="term" value="C:RNA polymerase I complex"/>
    <property type="evidence" value="ECO:0000318"/>
    <property type="project" value="GO_Central"/>
</dbReference>
<dbReference type="GO" id="GO:0006352">
    <property type="term" value="P:DNA-templated transcription initiation"/>
    <property type="evidence" value="ECO:0007669"/>
    <property type="project" value="InterPro"/>
</dbReference>
<dbReference type="GO" id="GO:0006362">
    <property type="term" value="P:transcription elongation by RNA polymerase I"/>
    <property type="evidence" value="ECO:0000318"/>
    <property type="project" value="GO_Central"/>
</dbReference>
<dbReference type="CDD" id="cd04328">
    <property type="entry name" value="RNAP_I_Rpa43_N"/>
    <property type="match status" value="1"/>
</dbReference>
<dbReference type="FunFam" id="3.30.1490.120:FF:000003">
    <property type="entry name" value="DNA-directed RNA polymerase I subunit RPA43"/>
    <property type="match status" value="1"/>
</dbReference>
<dbReference type="Gene3D" id="2.40.50.1060">
    <property type="match status" value="1"/>
</dbReference>
<dbReference type="Gene3D" id="3.30.1490.120">
    <property type="entry name" value="RNA polymerase Rpb7-like, N-terminal domain"/>
    <property type="match status" value="1"/>
</dbReference>
<dbReference type="InterPro" id="IPR036898">
    <property type="entry name" value="RNA_pol_Rpb7-like_N_sf"/>
</dbReference>
<dbReference type="InterPro" id="IPR041901">
    <property type="entry name" value="RNAP_I_Rpa43_N"/>
</dbReference>
<dbReference type="InterPro" id="IPR041178">
    <property type="entry name" value="RPA43_OB"/>
</dbReference>
<dbReference type="InterPro" id="IPR045113">
    <property type="entry name" value="Rpb7-like"/>
</dbReference>
<dbReference type="InterPro" id="IPR005576">
    <property type="entry name" value="Rpb7-like_N"/>
</dbReference>
<dbReference type="PANTHER" id="PTHR12709:SF5">
    <property type="entry name" value="DNA-DIRECTED RNA POLYMERASE I SUBUNIT RPA43"/>
    <property type="match status" value="1"/>
</dbReference>
<dbReference type="PANTHER" id="PTHR12709">
    <property type="entry name" value="DNA-DIRECTED RNA POLYMERASE II, III"/>
    <property type="match status" value="1"/>
</dbReference>
<dbReference type="Pfam" id="PF17875">
    <property type="entry name" value="RPA43_OB"/>
    <property type="match status" value="1"/>
</dbReference>
<dbReference type="Pfam" id="PF03876">
    <property type="entry name" value="SHS2_Rpb7-N"/>
    <property type="match status" value="1"/>
</dbReference>
<name>RPA43_DANRE</name>
<protein>
    <recommendedName>
        <fullName>DNA-directed RNA polymerase I subunit RPA43</fullName>
    </recommendedName>
    <alternativeName>
        <fullName evidence="2">DNA-directed RNA polymerase I subunit F</fullName>
    </alternativeName>
    <alternativeName>
        <fullName>Twist neighbor protein</fullName>
    </alternativeName>
</protein>